<accession>Q8ZGB3</accession>
<accession>Q0WH24</accession>
<organism>
    <name type="scientific">Yersinia pestis</name>
    <dbReference type="NCBI Taxonomy" id="632"/>
    <lineage>
        <taxon>Bacteria</taxon>
        <taxon>Pseudomonadati</taxon>
        <taxon>Pseudomonadota</taxon>
        <taxon>Gammaproteobacteria</taxon>
        <taxon>Enterobacterales</taxon>
        <taxon>Yersiniaceae</taxon>
        <taxon>Yersinia</taxon>
    </lineage>
</organism>
<sequence length="230" mass="25195">MTAIAPVITVDGPSGAGKGTLCKALAESLNWRLLDSGAIYRVLALAALHHQVDISTEEALVPLAAHLDVRFVSQNGQLQVILEGEDVSNEIRTETVGNTASQAAAFPRVREALLRRQRAFREAPGLIADGRDMGTIVFPDAPVKIFLDASSQERAHRRMLQLQERGFNVNFERLLAEIQERDNRDRNRSVAPLVPAADALVLDSTSMSIEQVIEQALAYAQRILALPLKK</sequence>
<dbReference type="EC" id="2.7.4.25" evidence="1"/>
<dbReference type="EMBL" id="AL590842">
    <property type="protein sequence ID" value="CAL20043.1"/>
    <property type="molecule type" value="Genomic_DNA"/>
</dbReference>
<dbReference type="EMBL" id="AE009952">
    <property type="protein sequence ID" value="AAM86334.1"/>
    <property type="molecule type" value="Genomic_DNA"/>
</dbReference>
<dbReference type="EMBL" id="AE017042">
    <property type="protein sequence ID" value="AAS61445.1"/>
    <property type="molecule type" value="Genomic_DNA"/>
</dbReference>
<dbReference type="PIR" id="AI0169">
    <property type="entry name" value="AI0169"/>
</dbReference>
<dbReference type="RefSeq" id="WP_002211324.1">
    <property type="nucleotide sequence ID" value="NZ_WUCM01000045.1"/>
</dbReference>
<dbReference type="RefSeq" id="YP_002346414.1">
    <property type="nucleotide sequence ID" value="NC_003143.1"/>
</dbReference>
<dbReference type="SMR" id="Q8ZGB3"/>
<dbReference type="STRING" id="214092.YPO1391"/>
<dbReference type="PaxDb" id="214092-YPO1391"/>
<dbReference type="DNASU" id="1147729"/>
<dbReference type="EnsemblBacteria" id="AAS61445">
    <property type="protein sequence ID" value="AAS61445"/>
    <property type="gene ID" value="YP_1202"/>
</dbReference>
<dbReference type="GeneID" id="57977187"/>
<dbReference type="KEGG" id="ype:YPO1391"/>
<dbReference type="KEGG" id="ypk:y2782"/>
<dbReference type="KEGG" id="ypm:YP_1202"/>
<dbReference type="PATRIC" id="fig|214092.21.peg.1714"/>
<dbReference type="eggNOG" id="COG0283">
    <property type="taxonomic scope" value="Bacteria"/>
</dbReference>
<dbReference type="HOGENOM" id="CLU_079959_2_0_6"/>
<dbReference type="OMA" id="RAITWWM"/>
<dbReference type="OrthoDB" id="9807434at2"/>
<dbReference type="Proteomes" id="UP000000815">
    <property type="component" value="Chromosome"/>
</dbReference>
<dbReference type="Proteomes" id="UP000001019">
    <property type="component" value="Chromosome"/>
</dbReference>
<dbReference type="Proteomes" id="UP000002490">
    <property type="component" value="Chromosome"/>
</dbReference>
<dbReference type="GO" id="GO:0005829">
    <property type="term" value="C:cytosol"/>
    <property type="evidence" value="ECO:0000318"/>
    <property type="project" value="GO_Central"/>
</dbReference>
<dbReference type="GO" id="GO:0004127">
    <property type="term" value="F:(d)CMP kinase activity"/>
    <property type="evidence" value="ECO:0000318"/>
    <property type="project" value="GO_Central"/>
</dbReference>
<dbReference type="GO" id="GO:0005524">
    <property type="term" value="F:ATP binding"/>
    <property type="evidence" value="ECO:0007669"/>
    <property type="project" value="UniProtKB-UniRule"/>
</dbReference>
<dbReference type="GO" id="GO:0036430">
    <property type="term" value="F:CMP kinase activity"/>
    <property type="evidence" value="ECO:0007669"/>
    <property type="project" value="RHEA"/>
</dbReference>
<dbReference type="GO" id="GO:0036431">
    <property type="term" value="F:dCMP kinase activity"/>
    <property type="evidence" value="ECO:0007669"/>
    <property type="project" value="RHEA"/>
</dbReference>
<dbReference type="GO" id="GO:0015949">
    <property type="term" value="P:nucleobase-containing small molecule interconversion"/>
    <property type="evidence" value="ECO:0000318"/>
    <property type="project" value="GO_Central"/>
</dbReference>
<dbReference type="GO" id="GO:0006220">
    <property type="term" value="P:pyrimidine nucleotide metabolic process"/>
    <property type="evidence" value="ECO:0007669"/>
    <property type="project" value="UniProtKB-UniRule"/>
</dbReference>
<dbReference type="CDD" id="cd02020">
    <property type="entry name" value="CMPK"/>
    <property type="match status" value="1"/>
</dbReference>
<dbReference type="FunFam" id="3.40.50.300:FF:000262">
    <property type="entry name" value="Cytidylate kinase"/>
    <property type="match status" value="1"/>
</dbReference>
<dbReference type="Gene3D" id="3.40.50.300">
    <property type="entry name" value="P-loop containing nucleotide triphosphate hydrolases"/>
    <property type="match status" value="1"/>
</dbReference>
<dbReference type="HAMAP" id="MF_00238">
    <property type="entry name" value="Cytidyl_kinase_type1"/>
    <property type="match status" value="1"/>
</dbReference>
<dbReference type="InterPro" id="IPR003136">
    <property type="entry name" value="Cytidylate_kin"/>
</dbReference>
<dbReference type="InterPro" id="IPR011994">
    <property type="entry name" value="Cytidylate_kinase_dom"/>
</dbReference>
<dbReference type="InterPro" id="IPR027417">
    <property type="entry name" value="P-loop_NTPase"/>
</dbReference>
<dbReference type="NCBIfam" id="TIGR00017">
    <property type="entry name" value="cmk"/>
    <property type="match status" value="1"/>
</dbReference>
<dbReference type="PANTHER" id="PTHR21299:SF2">
    <property type="entry name" value="CYTIDYLATE KINASE"/>
    <property type="match status" value="1"/>
</dbReference>
<dbReference type="PANTHER" id="PTHR21299">
    <property type="entry name" value="CYTIDYLATE KINASE/PANTOATE-BETA-ALANINE LIGASE"/>
    <property type="match status" value="1"/>
</dbReference>
<dbReference type="Pfam" id="PF02224">
    <property type="entry name" value="Cytidylate_kin"/>
    <property type="match status" value="1"/>
</dbReference>
<dbReference type="SUPFAM" id="SSF52540">
    <property type="entry name" value="P-loop containing nucleoside triphosphate hydrolases"/>
    <property type="match status" value="1"/>
</dbReference>
<name>KCY_YERPE</name>
<gene>
    <name evidence="1" type="primary">cmk</name>
    <name type="ordered locus">YPO1391</name>
    <name type="ordered locus">y2782</name>
    <name type="ordered locus">YP_1202</name>
</gene>
<protein>
    <recommendedName>
        <fullName evidence="1">Cytidylate kinase</fullName>
        <shortName evidence="1">CK</shortName>
        <ecNumber evidence="1">2.7.4.25</ecNumber>
    </recommendedName>
    <alternativeName>
        <fullName evidence="1">Cytidine monophosphate kinase</fullName>
        <shortName evidence="1">CMP kinase</shortName>
    </alternativeName>
</protein>
<evidence type="ECO:0000255" key="1">
    <source>
        <dbReference type="HAMAP-Rule" id="MF_00238"/>
    </source>
</evidence>
<proteinExistence type="inferred from homology"/>
<comment type="catalytic activity">
    <reaction evidence="1">
        <text>CMP + ATP = CDP + ADP</text>
        <dbReference type="Rhea" id="RHEA:11600"/>
        <dbReference type="ChEBI" id="CHEBI:30616"/>
        <dbReference type="ChEBI" id="CHEBI:58069"/>
        <dbReference type="ChEBI" id="CHEBI:60377"/>
        <dbReference type="ChEBI" id="CHEBI:456216"/>
        <dbReference type="EC" id="2.7.4.25"/>
    </reaction>
</comment>
<comment type="catalytic activity">
    <reaction evidence="1">
        <text>dCMP + ATP = dCDP + ADP</text>
        <dbReference type="Rhea" id="RHEA:25094"/>
        <dbReference type="ChEBI" id="CHEBI:30616"/>
        <dbReference type="ChEBI" id="CHEBI:57566"/>
        <dbReference type="ChEBI" id="CHEBI:58593"/>
        <dbReference type="ChEBI" id="CHEBI:456216"/>
        <dbReference type="EC" id="2.7.4.25"/>
    </reaction>
</comment>
<comment type="subcellular location">
    <subcellularLocation>
        <location evidence="1">Cytoplasm</location>
    </subcellularLocation>
</comment>
<comment type="similarity">
    <text evidence="1">Belongs to the cytidylate kinase family. Type 1 subfamily.</text>
</comment>
<feature type="chain" id="PRO_0000132006" description="Cytidylate kinase">
    <location>
        <begin position="1"/>
        <end position="230"/>
    </location>
</feature>
<feature type="binding site" evidence="1">
    <location>
        <begin position="12"/>
        <end position="20"/>
    </location>
    <ligand>
        <name>ATP</name>
        <dbReference type="ChEBI" id="CHEBI:30616"/>
    </ligand>
</feature>
<reference key="1">
    <citation type="journal article" date="2001" name="Nature">
        <title>Genome sequence of Yersinia pestis, the causative agent of plague.</title>
        <authorList>
            <person name="Parkhill J."/>
            <person name="Wren B.W."/>
            <person name="Thomson N.R."/>
            <person name="Titball R.W."/>
            <person name="Holden M.T.G."/>
            <person name="Prentice M.B."/>
            <person name="Sebaihia M."/>
            <person name="James K.D."/>
            <person name="Churcher C.M."/>
            <person name="Mungall K.L."/>
            <person name="Baker S."/>
            <person name="Basham D."/>
            <person name="Bentley S.D."/>
            <person name="Brooks K."/>
            <person name="Cerdeno-Tarraga A.-M."/>
            <person name="Chillingworth T."/>
            <person name="Cronin A."/>
            <person name="Davies R.M."/>
            <person name="Davis P."/>
            <person name="Dougan G."/>
            <person name="Feltwell T."/>
            <person name="Hamlin N."/>
            <person name="Holroyd S."/>
            <person name="Jagels K."/>
            <person name="Karlyshev A.V."/>
            <person name="Leather S."/>
            <person name="Moule S."/>
            <person name="Oyston P.C.F."/>
            <person name="Quail M.A."/>
            <person name="Rutherford K.M."/>
            <person name="Simmonds M."/>
            <person name="Skelton J."/>
            <person name="Stevens K."/>
            <person name="Whitehead S."/>
            <person name="Barrell B.G."/>
        </authorList>
    </citation>
    <scope>NUCLEOTIDE SEQUENCE [LARGE SCALE GENOMIC DNA]</scope>
    <source>
        <strain>CO-92 / Biovar Orientalis</strain>
    </source>
</reference>
<reference key="2">
    <citation type="journal article" date="2002" name="J. Bacteriol.">
        <title>Genome sequence of Yersinia pestis KIM.</title>
        <authorList>
            <person name="Deng W."/>
            <person name="Burland V."/>
            <person name="Plunkett G. III"/>
            <person name="Boutin A."/>
            <person name="Mayhew G.F."/>
            <person name="Liss P."/>
            <person name="Perna N.T."/>
            <person name="Rose D.J."/>
            <person name="Mau B."/>
            <person name="Zhou S."/>
            <person name="Schwartz D.C."/>
            <person name="Fetherston J.D."/>
            <person name="Lindler L.E."/>
            <person name="Brubaker R.R."/>
            <person name="Plano G.V."/>
            <person name="Straley S.C."/>
            <person name="McDonough K.A."/>
            <person name="Nilles M.L."/>
            <person name="Matson J.S."/>
            <person name="Blattner F.R."/>
            <person name="Perry R.D."/>
        </authorList>
    </citation>
    <scope>NUCLEOTIDE SEQUENCE [LARGE SCALE GENOMIC DNA]</scope>
    <source>
        <strain>KIM10+ / Biovar Mediaevalis</strain>
    </source>
</reference>
<reference key="3">
    <citation type="journal article" date="2004" name="DNA Res.">
        <title>Complete genome sequence of Yersinia pestis strain 91001, an isolate avirulent to humans.</title>
        <authorList>
            <person name="Song Y."/>
            <person name="Tong Z."/>
            <person name="Wang J."/>
            <person name="Wang L."/>
            <person name="Guo Z."/>
            <person name="Han Y."/>
            <person name="Zhang J."/>
            <person name="Pei D."/>
            <person name="Zhou D."/>
            <person name="Qin H."/>
            <person name="Pang X."/>
            <person name="Han Y."/>
            <person name="Zhai J."/>
            <person name="Li M."/>
            <person name="Cui B."/>
            <person name="Qi Z."/>
            <person name="Jin L."/>
            <person name="Dai R."/>
            <person name="Chen F."/>
            <person name="Li S."/>
            <person name="Ye C."/>
            <person name="Du Z."/>
            <person name="Lin W."/>
            <person name="Wang J."/>
            <person name="Yu J."/>
            <person name="Yang H."/>
            <person name="Wang J."/>
            <person name="Huang P."/>
            <person name="Yang R."/>
        </authorList>
    </citation>
    <scope>NUCLEOTIDE SEQUENCE [LARGE SCALE GENOMIC DNA]</scope>
    <source>
        <strain>91001 / Biovar Mediaevalis</strain>
    </source>
</reference>
<keyword id="KW-0067">ATP-binding</keyword>
<keyword id="KW-0963">Cytoplasm</keyword>
<keyword id="KW-0418">Kinase</keyword>
<keyword id="KW-0547">Nucleotide-binding</keyword>
<keyword id="KW-1185">Reference proteome</keyword>
<keyword id="KW-0808">Transferase</keyword>